<gene>
    <name evidence="1" type="primary">hscA</name>
    <name type="ordered locus">Daci_3995</name>
</gene>
<reference key="1">
    <citation type="submission" date="2007-11" db="EMBL/GenBank/DDBJ databases">
        <title>Complete sequence of Delftia acidovorans DSM 14801 / SPH-1.</title>
        <authorList>
            <person name="Copeland A."/>
            <person name="Lucas S."/>
            <person name="Lapidus A."/>
            <person name="Barry K."/>
            <person name="Glavina del Rio T."/>
            <person name="Dalin E."/>
            <person name="Tice H."/>
            <person name="Pitluck S."/>
            <person name="Lowry S."/>
            <person name="Clum A."/>
            <person name="Schmutz J."/>
            <person name="Larimer F."/>
            <person name="Land M."/>
            <person name="Hauser L."/>
            <person name="Kyrpides N."/>
            <person name="Kim E."/>
            <person name="Schleheck D."/>
            <person name="Richardson P."/>
        </authorList>
    </citation>
    <scope>NUCLEOTIDE SEQUENCE [LARGE SCALE GENOMIC DNA]</scope>
    <source>
        <strain>DSM 14801 / SPH-1</strain>
    </source>
</reference>
<feature type="chain" id="PRO_1000131671" description="Chaperone protein HscA homolog">
    <location>
        <begin position="1"/>
        <end position="622"/>
    </location>
</feature>
<comment type="function">
    <text evidence="1">Chaperone involved in the maturation of iron-sulfur cluster-containing proteins. Has a low intrinsic ATPase activity which is markedly stimulated by HscB.</text>
</comment>
<comment type="similarity">
    <text evidence="1">Belongs to the heat shock protein 70 family.</text>
</comment>
<proteinExistence type="inferred from homology"/>
<organism>
    <name type="scientific">Delftia acidovorans (strain DSM 14801 / SPH-1)</name>
    <dbReference type="NCBI Taxonomy" id="398578"/>
    <lineage>
        <taxon>Bacteria</taxon>
        <taxon>Pseudomonadati</taxon>
        <taxon>Pseudomonadota</taxon>
        <taxon>Betaproteobacteria</taxon>
        <taxon>Burkholderiales</taxon>
        <taxon>Comamonadaceae</taxon>
        <taxon>Delftia</taxon>
    </lineage>
</organism>
<protein>
    <recommendedName>
        <fullName evidence="1">Chaperone protein HscA homolog</fullName>
    </recommendedName>
</protein>
<sequence length="622" mass="65633">MALLQISEPGQSPDPHQRRIAVGIDLGTTHSLVAAVRNGVAECLPDDQGRVLLPSVVRYLPQGRREIGHAAQAALSTDAGNTIASAKRFMGRTLADIDAPEKLPYRFAEQEAGRGVIGIETVDGTKTAVEVSAEILATLRFRAEDTFNDDIHGAVITVPAYFDDAQRQATKDAAKLAGINLLRLINEPTAAAIAYGLDNGSEGVYAVYDLGGGTFDISILRLSQGVFEVVSTGGDSALGGDDYDAALAEWVAQQTGVVPQTAEDKARWRMAARLCKQALTDAQVATLTAELSTGAVHFDVKRSDFDASTAHLTARSLAAVRRALKDAGLARDEVQGVVLVGGSTRMPQVREAVAEFFGRDPLINLNPDEVVALGAAIQANQLAGNSSSGDMLLLDVIPLSLGVETMGGLVERIISRNETIPTARAQDFTTYKDGQTALAVHVVQGERDLVADCRSLARFELRGIPPMAAGAARIRVTFTVDADGLLSVGAKEQTSGVEAHIHVKPSYGLSDDEVARMLQDGFATAQQDMQARALVEARVDADRMLMATESALQADGDVLAADQRAAIDALIDALRASVGSEDAAVIEAATQALAKGTESFAAERMNRSIQQALAGKSVQSLS</sequence>
<evidence type="ECO:0000255" key="1">
    <source>
        <dbReference type="HAMAP-Rule" id="MF_00679"/>
    </source>
</evidence>
<dbReference type="EMBL" id="CP000884">
    <property type="protein sequence ID" value="ABX36626.1"/>
    <property type="molecule type" value="Genomic_DNA"/>
</dbReference>
<dbReference type="RefSeq" id="WP_012205820.1">
    <property type="nucleotide sequence ID" value="NC_010002.1"/>
</dbReference>
<dbReference type="SMR" id="A9BWU9"/>
<dbReference type="STRING" id="398578.Daci_3995"/>
<dbReference type="GeneID" id="24115034"/>
<dbReference type="KEGG" id="dac:Daci_3995"/>
<dbReference type="eggNOG" id="COG0443">
    <property type="taxonomic scope" value="Bacteria"/>
</dbReference>
<dbReference type="HOGENOM" id="CLU_005965_2_3_4"/>
<dbReference type="Proteomes" id="UP000000784">
    <property type="component" value="Chromosome"/>
</dbReference>
<dbReference type="GO" id="GO:0005524">
    <property type="term" value="F:ATP binding"/>
    <property type="evidence" value="ECO:0007669"/>
    <property type="project" value="UniProtKB-KW"/>
</dbReference>
<dbReference type="GO" id="GO:0016887">
    <property type="term" value="F:ATP hydrolysis activity"/>
    <property type="evidence" value="ECO:0007669"/>
    <property type="project" value="UniProtKB-UniRule"/>
</dbReference>
<dbReference type="GO" id="GO:0140662">
    <property type="term" value="F:ATP-dependent protein folding chaperone"/>
    <property type="evidence" value="ECO:0007669"/>
    <property type="project" value="InterPro"/>
</dbReference>
<dbReference type="GO" id="GO:0051082">
    <property type="term" value="F:unfolded protein binding"/>
    <property type="evidence" value="ECO:0007669"/>
    <property type="project" value="InterPro"/>
</dbReference>
<dbReference type="GO" id="GO:0016226">
    <property type="term" value="P:iron-sulfur cluster assembly"/>
    <property type="evidence" value="ECO:0007669"/>
    <property type="project" value="InterPro"/>
</dbReference>
<dbReference type="FunFam" id="3.30.420.40:FF:000046">
    <property type="entry name" value="Chaperone protein HscA"/>
    <property type="match status" value="1"/>
</dbReference>
<dbReference type="FunFam" id="2.60.34.10:FF:000005">
    <property type="entry name" value="Chaperone protein HscA homolog"/>
    <property type="match status" value="1"/>
</dbReference>
<dbReference type="Gene3D" id="1.20.1270.10">
    <property type="match status" value="1"/>
</dbReference>
<dbReference type="Gene3D" id="3.30.420.40">
    <property type="match status" value="2"/>
</dbReference>
<dbReference type="Gene3D" id="3.90.640.10">
    <property type="entry name" value="Actin, Chain A, domain 4"/>
    <property type="match status" value="1"/>
</dbReference>
<dbReference type="Gene3D" id="2.60.34.10">
    <property type="entry name" value="Substrate Binding Domain Of DNAk, Chain A, domain 1"/>
    <property type="match status" value="1"/>
</dbReference>
<dbReference type="HAMAP" id="MF_00679">
    <property type="entry name" value="HscA"/>
    <property type="match status" value="1"/>
</dbReference>
<dbReference type="InterPro" id="IPR043129">
    <property type="entry name" value="ATPase_NBD"/>
</dbReference>
<dbReference type="InterPro" id="IPR018181">
    <property type="entry name" value="Heat_shock_70_CS"/>
</dbReference>
<dbReference type="InterPro" id="IPR029048">
    <property type="entry name" value="HSP70_C_sf"/>
</dbReference>
<dbReference type="InterPro" id="IPR029047">
    <property type="entry name" value="HSP70_peptide-bd_sf"/>
</dbReference>
<dbReference type="InterPro" id="IPR013126">
    <property type="entry name" value="Hsp_70_fam"/>
</dbReference>
<dbReference type="InterPro" id="IPR010236">
    <property type="entry name" value="ISC_FeS_clus_asmbl_HscA"/>
</dbReference>
<dbReference type="NCBIfam" id="TIGR01991">
    <property type="entry name" value="HscA"/>
    <property type="match status" value="1"/>
</dbReference>
<dbReference type="NCBIfam" id="NF003520">
    <property type="entry name" value="PRK05183.1"/>
    <property type="match status" value="1"/>
</dbReference>
<dbReference type="PANTHER" id="PTHR19375">
    <property type="entry name" value="HEAT SHOCK PROTEIN 70KDA"/>
    <property type="match status" value="1"/>
</dbReference>
<dbReference type="Pfam" id="PF00012">
    <property type="entry name" value="HSP70"/>
    <property type="match status" value="1"/>
</dbReference>
<dbReference type="PRINTS" id="PR00301">
    <property type="entry name" value="HEATSHOCK70"/>
</dbReference>
<dbReference type="SUPFAM" id="SSF53067">
    <property type="entry name" value="Actin-like ATPase domain"/>
    <property type="match status" value="2"/>
</dbReference>
<dbReference type="SUPFAM" id="SSF100934">
    <property type="entry name" value="Heat shock protein 70kD (HSP70), C-terminal subdomain"/>
    <property type="match status" value="1"/>
</dbReference>
<dbReference type="SUPFAM" id="SSF100920">
    <property type="entry name" value="Heat shock protein 70kD (HSP70), peptide-binding domain"/>
    <property type="match status" value="1"/>
</dbReference>
<dbReference type="PROSITE" id="PS00297">
    <property type="entry name" value="HSP70_1"/>
    <property type="match status" value="1"/>
</dbReference>
<dbReference type="PROSITE" id="PS00329">
    <property type="entry name" value="HSP70_2"/>
    <property type="match status" value="1"/>
</dbReference>
<dbReference type="PROSITE" id="PS01036">
    <property type="entry name" value="HSP70_3"/>
    <property type="match status" value="1"/>
</dbReference>
<accession>A9BWU9</accession>
<keyword id="KW-0067">ATP-binding</keyword>
<keyword id="KW-0143">Chaperone</keyword>
<keyword id="KW-0547">Nucleotide-binding</keyword>
<keyword id="KW-1185">Reference proteome</keyword>
<name>HSCA_DELAS</name>